<keyword id="KW-1185">Reference proteome</keyword>
<accession>Q8TI87</accession>
<organism>
    <name type="scientific">Methanosarcina acetivorans (strain ATCC 35395 / DSM 2834 / JCM 12185 / C2A)</name>
    <dbReference type="NCBI Taxonomy" id="188937"/>
    <lineage>
        <taxon>Archaea</taxon>
        <taxon>Methanobacteriati</taxon>
        <taxon>Methanobacteriota</taxon>
        <taxon>Stenosarchaea group</taxon>
        <taxon>Methanomicrobia</taxon>
        <taxon>Methanosarcinales</taxon>
        <taxon>Methanosarcinaceae</taxon>
        <taxon>Methanosarcina</taxon>
    </lineage>
</organism>
<sequence length="196" mass="21977">MDLDFHIKPEIRVLGIDDSALLNEKVMIVGTVFRGGDWMDGVLRSEITRDGLDATEVISTMIKNSRHYAQLRIVMLDGVTYGGFNVVDIEELYRETGLPVIVVMRAYPDFEKIRAALRHFSDGELRWEIIKKAGKIEKLVTEKNGTPIYIQKAGIGLKSAEKIVRLTSIRSNIPEPLRVAHLIATGIIFGESRGRA</sequence>
<gene>
    <name type="ordered locus">MA_4269</name>
</gene>
<proteinExistence type="inferred from homology"/>
<comment type="similarity">
    <text evidence="1">Belongs to the UPF0215 family.</text>
</comment>
<reference key="1">
    <citation type="journal article" date="2002" name="Genome Res.">
        <title>The genome of Methanosarcina acetivorans reveals extensive metabolic and physiological diversity.</title>
        <authorList>
            <person name="Galagan J.E."/>
            <person name="Nusbaum C."/>
            <person name="Roy A."/>
            <person name="Endrizzi M.G."/>
            <person name="Macdonald P."/>
            <person name="FitzHugh W."/>
            <person name="Calvo S."/>
            <person name="Engels R."/>
            <person name="Smirnov S."/>
            <person name="Atnoor D."/>
            <person name="Brown A."/>
            <person name="Allen N."/>
            <person name="Naylor J."/>
            <person name="Stange-Thomann N."/>
            <person name="DeArellano K."/>
            <person name="Johnson R."/>
            <person name="Linton L."/>
            <person name="McEwan P."/>
            <person name="McKernan K."/>
            <person name="Talamas J."/>
            <person name="Tirrell A."/>
            <person name="Ye W."/>
            <person name="Zimmer A."/>
            <person name="Barber R.D."/>
            <person name="Cann I."/>
            <person name="Graham D.E."/>
            <person name="Grahame D.A."/>
            <person name="Guss A.M."/>
            <person name="Hedderich R."/>
            <person name="Ingram-Smith C."/>
            <person name="Kuettner H.C."/>
            <person name="Krzycki J.A."/>
            <person name="Leigh J.A."/>
            <person name="Li W."/>
            <person name="Liu J."/>
            <person name="Mukhopadhyay B."/>
            <person name="Reeve J.N."/>
            <person name="Smith K."/>
            <person name="Springer T.A."/>
            <person name="Umayam L.A."/>
            <person name="White O."/>
            <person name="White R.H."/>
            <person name="de Macario E.C."/>
            <person name="Ferry J.G."/>
            <person name="Jarrell K.F."/>
            <person name="Jing H."/>
            <person name="Macario A.J.L."/>
            <person name="Paulsen I.T."/>
            <person name="Pritchett M."/>
            <person name="Sowers K.R."/>
            <person name="Swanson R.V."/>
            <person name="Zinder S.H."/>
            <person name="Lander E."/>
            <person name="Metcalf W.W."/>
            <person name="Birren B."/>
        </authorList>
    </citation>
    <scope>NUCLEOTIDE SEQUENCE [LARGE SCALE GENOMIC DNA]</scope>
    <source>
        <strain>ATCC 35395 / DSM 2834 / JCM 12185 / C2A</strain>
    </source>
</reference>
<dbReference type="EMBL" id="AE010299">
    <property type="protein sequence ID" value="AAM07613.1"/>
    <property type="molecule type" value="Genomic_DNA"/>
</dbReference>
<dbReference type="RefSeq" id="WP_011024150.1">
    <property type="nucleotide sequence ID" value="NC_003552.1"/>
</dbReference>
<dbReference type="SMR" id="Q8TI87"/>
<dbReference type="STRING" id="188937.MA_4269"/>
<dbReference type="EnsemblBacteria" id="AAM07613">
    <property type="protein sequence ID" value="AAM07613"/>
    <property type="gene ID" value="MA_4269"/>
</dbReference>
<dbReference type="GeneID" id="1476163"/>
<dbReference type="KEGG" id="mac:MA_4269"/>
<dbReference type="HOGENOM" id="CLU_095956_1_0_2"/>
<dbReference type="InParanoid" id="Q8TI87"/>
<dbReference type="OrthoDB" id="15207at2157"/>
<dbReference type="PhylomeDB" id="Q8TI87"/>
<dbReference type="Proteomes" id="UP000002487">
    <property type="component" value="Chromosome"/>
</dbReference>
<dbReference type="Gene3D" id="3.30.2170.10">
    <property type="entry name" value="archaeoglobus fulgidus dsm 4304 superfamily"/>
    <property type="match status" value="1"/>
</dbReference>
<dbReference type="HAMAP" id="MF_00582">
    <property type="entry name" value="UPF0215"/>
    <property type="match status" value="1"/>
</dbReference>
<dbReference type="InterPro" id="IPR002802">
    <property type="entry name" value="Endo_dU"/>
</dbReference>
<dbReference type="NCBIfam" id="NF001977">
    <property type="entry name" value="PRK00766.1"/>
    <property type="match status" value="1"/>
</dbReference>
<dbReference type="PANTHER" id="PTHR39518">
    <property type="entry name" value="UPF0215 PROTEIN MJ1150"/>
    <property type="match status" value="1"/>
</dbReference>
<dbReference type="PANTHER" id="PTHR39518:SF2">
    <property type="entry name" value="UPF0215 PROTEIN MJ1150"/>
    <property type="match status" value="1"/>
</dbReference>
<dbReference type="Pfam" id="PF01949">
    <property type="entry name" value="DUF99"/>
    <property type="match status" value="1"/>
</dbReference>
<dbReference type="PIRSF" id="PIRSF006380">
    <property type="entry name" value="UCP006380"/>
    <property type="match status" value="1"/>
</dbReference>
<feature type="chain" id="PRO_0000149232" description="UPF0215 protein MA_4269">
    <location>
        <begin position="1"/>
        <end position="196"/>
    </location>
</feature>
<protein>
    <recommendedName>
        <fullName evidence="1">UPF0215 protein MA_4269</fullName>
    </recommendedName>
</protein>
<name>Y4269_METAC</name>
<evidence type="ECO:0000255" key="1">
    <source>
        <dbReference type="HAMAP-Rule" id="MF_00582"/>
    </source>
</evidence>